<protein>
    <recommendedName>
        <fullName evidence="1">Large ribosomal subunit protein uL16</fullName>
    </recommendedName>
    <alternativeName>
        <fullName evidence="2">50S ribosomal protein L16</fullName>
    </alternativeName>
</protein>
<accession>C1CIA4</accession>
<gene>
    <name evidence="1" type="primary">rplP</name>
    <name type="ordered locus">SPP_0267</name>
</gene>
<feature type="chain" id="PRO_1000166384" description="Large ribosomal subunit protein uL16">
    <location>
        <begin position="1"/>
        <end position="137"/>
    </location>
</feature>
<evidence type="ECO:0000255" key="1">
    <source>
        <dbReference type="HAMAP-Rule" id="MF_01342"/>
    </source>
</evidence>
<evidence type="ECO:0000305" key="2"/>
<sequence length="137" mass="15436">MLVPKRVKHRREFRGKMRGEAKGGKEVAFGEYGLQATTSHWITNRQIEAARIAMTRYMKRGGKVWIKIFPHKSYTAKAIGVRMGSGKGAPEGWVAPVKRGKVMFEIAGVSEEIAREALRLASHKLPVKCKFVKREAE</sequence>
<comment type="function">
    <text evidence="1">Binds 23S rRNA and is also seen to make contacts with the A and possibly P site tRNAs.</text>
</comment>
<comment type="subunit">
    <text evidence="1">Part of the 50S ribosomal subunit.</text>
</comment>
<comment type="similarity">
    <text evidence="1">Belongs to the universal ribosomal protein uL16 family.</text>
</comment>
<dbReference type="EMBL" id="CP000920">
    <property type="protein sequence ID" value="ACO21601.1"/>
    <property type="molecule type" value="Genomic_DNA"/>
</dbReference>
<dbReference type="RefSeq" id="WP_000960946.1">
    <property type="nucleotide sequence ID" value="NC_012467.1"/>
</dbReference>
<dbReference type="SMR" id="C1CIA4"/>
<dbReference type="GeneID" id="93738964"/>
<dbReference type="KEGG" id="spp:SPP_0267"/>
<dbReference type="HOGENOM" id="CLU_078858_2_1_9"/>
<dbReference type="GO" id="GO:0022625">
    <property type="term" value="C:cytosolic large ribosomal subunit"/>
    <property type="evidence" value="ECO:0007669"/>
    <property type="project" value="TreeGrafter"/>
</dbReference>
<dbReference type="GO" id="GO:0019843">
    <property type="term" value="F:rRNA binding"/>
    <property type="evidence" value="ECO:0007669"/>
    <property type="project" value="UniProtKB-UniRule"/>
</dbReference>
<dbReference type="GO" id="GO:0003735">
    <property type="term" value="F:structural constituent of ribosome"/>
    <property type="evidence" value="ECO:0007669"/>
    <property type="project" value="InterPro"/>
</dbReference>
<dbReference type="GO" id="GO:0000049">
    <property type="term" value="F:tRNA binding"/>
    <property type="evidence" value="ECO:0007669"/>
    <property type="project" value="UniProtKB-KW"/>
</dbReference>
<dbReference type="GO" id="GO:0006412">
    <property type="term" value="P:translation"/>
    <property type="evidence" value="ECO:0007669"/>
    <property type="project" value="UniProtKB-UniRule"/>
</dbReference>
<dbReference type="CDD" id="cd01433">
    <property type="entry name" value="Ribosomal_L16_L10e"/>
    <property type="match status" value="1"/>
</dbReference>
<dbReference type="FunFam" id="3.90.1170.10:FF:000001">
    <property type="entry name" value="50S ribosomal protein L16"/>
    <property type="match status" value="1"/>
</dbReference>
<dbReference type="Gene3D" id="3.90.1170.10">
    <property type="entry name" value="Ribosomal protein L10e/L16"/>
    <property type="match status" value="1"/>
</dbReference>
<dbReference type="HAMAP" id="MF_01342">
    <property type="entry name" value="Ribosomal_uL16"/>
    <property type="match status" value="1"/>
</dbReference>
<dbReference type="InterPro" id="IPR047873">
    <property type="entry name" value="Ribosomal_uL16"/>
</dbReference>
<dbReference type="InterPro" id="IPR000114">
    <property type="entry name" value="Ribosomal_uL16_bact-type"/>
</dbReference>
<dbReference type="InterPro" id="IPR020798">
    <property type="entry name" value="Ribosomal_uL16_CS"/>
</dbReference>
<dbReference type="InterPro" id="IPR016180">
    <property type="entry name" value="Ribosomal_uL16_dom"/>
</dbReference>
<dbReference type="InterPro" id="IPR036920">
    <property type="entry name" value="Ribosomal_uL16_sf"/>
</dbReference>
<dbReference type="NCBIfam" id="TIGR01164">
    <property type="entry name" value="rplP_bact"/>
    <property type="match status" value="1"/>
</dbReference>
<dbReference type="PANTHER" id="PTHR12220">
    <property type="entry name" value="50S/60S RIBOSOMAL PROTEIN L16"/>
    <property type="match status" value="1"/>
</dbReference>
<dbReference type="PANTHER" id="PTHR12220:SF13">
    <property type="entry name" value="LARGE RIBOSOMAL SUBUNIT PROTEIN UL16M"/>
    <property type="match status" value="1"/>
</dbReference>
<dbReference type="Pfam" id="PF00252">
    <property type="entry name" value="Ribosomal_L16"/>
    <property type="match status" value="1"/>
</dbReference>
<dbReference type="PRINTS" id="PR00060">
    <property type="entry name" value="RIBOSOMALL16"/>
</dbReference>
<dbReference type="SUPFAM" id="SSF54686">
    <property type="entry name" value="Ribosomal protein L16p/L10e"/>
    <property type="match status" value="1"/>
</dbReference>
<dbReference type="PROSITE" id="PS00586">
    <property type="entry name" value="RIBOSOMAL_L16_1"/>
    <property type="match status" value="1"/>
</dbReference>
<dbReference type="PROSITE" id="PS00701">
    <property type="entry name" value="RIBOSOMAL_L16_2"/>
    <property type="match status" value="1"/>
</dbReference>
<organism>
    <name type="scientific">Streptococcus pneumoniae (strain P1031)</name>
    <dbReference type="NCBI Taxonomy" id="488223"/>
    <lineage>
        <taxon>Bacteria</taxon>
        <taxon>Bacillati</taxon>
        <taxon>Bacillota</taxon>
        <taxon>Bacilli</taxon>
        <taxon>Lactobacillales</taxon>
        <taxon>Streptococcaceae</taxon>
        <taxon>Streptococcus</taxon>
    </lineage>
</organism>
<reference key="1">
    <citation type="journal article" date="2010" name="Genome Biol.">
        <title>Structure and dynamics of the pan-genome of Streptococcus pneumoniae and closely related species.</title>
        <authorList>
            <person name="Donati C."/>
            <person name="Hiller N.L."/>
            <person name="Tettelin H."/>
            <person name="Muzzi A."/>
            <person name="Croucher N.J."/>
            <person name="Angiuoli S.V."/>
            <person name="Oggioni M."/>
            <person name="Dunning Hotopp J.C."/>
            <person name="Hu F.Z."/>
            <person name="Riley D.R."/>
            <person name="Covacci A."/>
            <person name="Mitchell T.J."/>
            <person name="Bentley S.D."/>
            <person name="Kilian M."/>
            <person name="Ehrlich G.D."/>
            <person name="Rappuoli R."/>
            <person name="Moxon E.R."/>
            <person name="Masignani V."/>
        </authorList>
    </citation>
    <scope>NUCLEOTIDE SEQUENCE [LARGE SCALE GENOMIC DNA]</scope>
    <source>
        <strain>P1031</strain>
    </source>
</reference>
<name>RL16_STRZP</name>
<proteinExistence type="inferred from homology"/>
<keyword id="KW-0687">Ribonucleoprotein</keyword>
<keyword id="KW-0689">Ribosomal protein</keyword>
<keyword id="KW-0694">RNA-binding</keyword>
<keyword id="KW-0699">rRNA-binding</keyword>
<keyword id="KW-0820">tRNA-binding</keyword>